<dbReference type="GO" id="GO:0005576">
    <property type="term" value="C:extracellular region"/>
    <property type="evidence" value="ECO:0007669"/>
    <property type="project" value="UniProtKB-SubCell"/>
</dbReference>
<dbReference type="GO" id="GO:0006952">
    <property type="term" value="P:defense response"/>
    <property type="evidence" value="ECO:0007669"/>
    <property type="project" value="UniProtKB-KW"/>
</dbReference>
<keyword id="KW-0027">Amidation</keyword>
<keyword id="KW-0878">Amphibian defense peptide</keyword>
<keyword id="KW-0903">Direct protein sequencing</keyword>
<keyword id="KW-0964">Secreted</keyword>
<proteinExistence type="evidence at protein level"/>
<feature type="peptide" id="PRO_0000250416" description="Tryptophyllin-T2-4" evidence="2">
    <location>
        <begin position="1"/>
        <end position="5"/>
    </location>
</feature>
<feature type="modified residue" description="Methionine amide" evidence="2">
    <location>
        <position position="5"/>
    </location>
</feature>
<name>TY24_PITAZ</name>
<reference evidence="4" key="1">
    <citation type="journal article" date="2007" name="J. Proteome Res.">
        <title>Amphibian skin secretomics: application of parallel quadrupole time-of-flight mass spectrometry and peptide precursor cDNA cloning to rapidly characterize the skin secretory peptidome of Phyllomedusa hypochondrialis azurea: discovery of a novel peptide family, the hyposins.</title>
        <authorList>
            <person name="Thompson A.H."/>
            <person name="Bjourson A.J."/>
            <person name="Orr D.F."/>
            <person name="Shaw C."/>
            <person name="McClean S."/>
        </authorList>
    </citation>
    <scope>PROTEIN SEQUENCE</scope>
    <scope>SUBCELLULAR LOCATION</scope>
    <scope>TISSUE SPECIFICITY</scope>
    <scope>MASS SPECTROMETRY</scope>
    <scope>AMIDATION AT MET-5</scope>
    <source>
        <tissue evidence="2">Skin secretion</tissue>
    </source>
</reference>
<evidence type="ECO:0000255" key="1"/>
<evidence type="ECO:0000269" key="2">
    <source>
    </source>
</evidence>
<evidence type="ECO:0000303" key="3">
    <source>
    </source>
</evidence>
<evidence type="ECO:0000305" key="4"/>
<accession>P84948</accession>
<organism>
    <name type="scientific">Pithecopus azureus</name>
    <name type="common">Orange-legged monkey tree frog</name>
    <name type="synonym">Phyllomedusa azurea</name>
    <dbReference type="NCBI Taxonomy" id="2034991"/>
    <lineage>
        <taxon>Eukaryota</taxon>
        <taxon>Metazoa</taxon>
        <taxon>Chordata</taxon>
        <taxon>Craniata</taxon>
        <taxon>Vertebrata</taxon>
        <taxon>Euteleostomi</taxon>
        <taxon>Amphibia</taxon>
        <taxon>Batrachia</taxon>
        <taxon>Anura</taxon>
        <taxon>Neobatrachia</taxon>
        <taxon>Hyloidea</taxon>
        <taxon>Hylidae</taxon>
        <taxon>Phyllomedusinae</taxon>
        <taxon>Pithecopus</taxon>
    </lineage>
</organism>
<protein>
    <recommendedName>
        <fullName evidence="3">Tryptophyllin-T2-4</fullName>
        <shortName evidence="3">Pha-T2-4</shortName>
    </recommendedName>
    <alternativeName>
        <fullName evidence="3">Tryptophyllin-8</fullName>
    </alternativeName>
</protein>
<sequence length="5" mass="677">FPPWM</sequence>
<comment type="subcellular location">
    <subcellularLocation>
        <location evidence="2">Secreted</location>
    </subcellularLocation>
</comment>
<comment type="tissue specificity">
    <text evidence="2">Expressed by the skin glands.</text>
</comment>
<comment type="mass spectrometry" mass="675.31" method="MALDI" evidence="2"/>
<comment type="similarity">
    <text evidence="1">Belongs to the frog skin active peptide (FSAP) family. Tryptophillin subfamily.</text>
</comment>